<keyword id="KW-0963">Cytoplasm</keyword>
<keyword id="KW-0694">RNA-binding</keyword>
<comment type="function">
    <text evidence="1">Required for rescue of stalled ribosomes mediated by trans-translation. Binds to transfer-messenger RNA (tmRNA), required for stable association of tmRNA with ribosomes. tmRNA and SmpB together mimic tRNA shape, replacing the anticodon stem-loop with SmpB. tmRNA is encoded by the ssrA gene; the 2 termini fold to resemble tRNA(Ala) and it encodes a 'tag peptide', a short internal open reading frame. During trans-translation Ala-aminoacylated tmRNA acts like a tRNA, entering the A-site of stalled ribosomes, displacing the stalled mRNA. The ribosome then switches to translate the ORF on the tmRNA; the nascent peptide is terminated with the 'tag peptide' encoded by the tmRNA and targeted for degradation. The ribosome is freed to recommence translation, which seems to be the essential function of trans-translation.</text>
</comment>
<comment type="subcellular location">
    <subcellularLocation>
        <location evidence="1">Cytoplasm</location>
    </subcellularLocation>
    <text evidence="1">The tmRNA-SmpB complex associates with stalled 70S ribosomes.</text>
</comment>
<comment type="similarity">
    <text evidence="1">Belongs to the SmpB family.</text>
</comment>
<accession>Q2FIL2</accession>
<organism>
    <name type="scientific">Staphylococcus aureus (strain USA300)</name>
    <dbReference type="NCBI Taxonomy" id="367830"/>
    <lineage>
        <taxon>Bacteria</taxon>
        <taxon>Bacillati</taxon>
        <taxon>Bacillota</taxon>
        <taxon>Bacilli</taxon>
        <taxon>Bacillales</taxon>
        <taxon>Staphylococcaceae</taxon>
        <taxon>Staphylococcus</taxon>
    </lineage>
</organism>
<proteinExistence type="inferred from homology"/>
<protein>
    <recommendedName>
        <fullName evidence="1">SsrA-binding protein</fullName>
    </recommendedName>
    <alternativeName>
        <fullName evidence="1">Small protein B</fullName>
    </alternativeName>
</protein>
<name>SSRP_STAA3</name>
<sequence>MAKKKSPGTLAENRKARHDYNIEDTIEAGIVLQGTEIKSIRRGSANLKDSYAQVKNGEMYLNNMHIAPYEEGNRFNHDPLRSRKLLLHKREIIKLGDQTREIGYSIVPLKLYLKHGHCKVLLGVARGKKKYDKRQALKEKAVKRDVARDMKARY</sequence>
<reference key="1">
    <citation type="journal article" date="2006" name="Lancet">
        <title>Complete genome sequence of USA300, an epidemic clone of community-acquired meticillin-resistant Staphylococcus aureus.</title>
        <authorList>
            <person name="Diep B.A."/>
            <person name="Gill S.R."/>
            <person name="Chang R.F."/>
            <person name="Phan T.H."/>
            <person name="Chen J.H."/>
            <person name="Davidson M.G."/>
            <person name="Lin F."/>
            <person name="Lin J."/>
            <person name="Carleton H.A."/>
            <person name="Mongodin E.F."/>
            <person name="Sensabaugh G.F."/>
            <person name="Perdreau-Remington F."/>
        </authorList>
    </citation>
    <scope>NUCLEOTIDE SEQUENCE [LARGE SCALE GENOMIC DNA]</scope>
    <source>
        <strain>USA300</strain>
    </source>
</reference>
<dbReference type="EMBL" id="CP000255">
    <property type="protein sequence ID" value="ABD22674.1"/>
    <property type="molecule type" value="Genomic_DNA"/>
</dbReference>
<dbReference type="RefSeq" id="WP_001085185.1">
    <property type="nucleotide sequence ID" value="NZ_CP027476.1"/>
</dbReference>
<dbReference type="SMR" id="Q2FIL2"/>
<dbReference type="KEGG" id="saa:SAUSA300_0765"/>
<dbReference type="HOGENOM" id="CLU_108953_0_0_9"/>
<dbReference type="OMA" id="WTNHSAR"/>
<dbReference type="Proteomes" id="UP000001939">
    <property type="component" value="Chromosome"/>
</dbReference>
<dbReference type="GO" id="GO:0005829">
    <property type="term" value="C:cytosol"/>
    <property type="evidence" value="ECO:0007669"/>
    <property type="project" value="TreeGrafter"/>
</dbReference>
<dbReference type="GO" id="GO:0003723">
    <property type="term" value="F:RNA binding"/>
    <property type="evidence" value="ECO:0007669"/>
    <property type="project" value="UniProtKB-UniRule"/>
</dbReference>
<dbReference type="GO" id="GO:0070929">
    <property type="term" value="P:trans-translation"/>
    <property type="evidence" value="ECO:0007669"/>
    <property type="project" value="UniProtKB-UniRule"/>
</dbReference>
<dbReference type="CDD" id="cd09294">
    <property type="entry name" value="SmpB"/>
    <property type="match status" value="1"/>
</dbReference>
<dbReference type="Gene3D" id="2.40.280.10">
    <property type="match status" value="1"/>
</dbReference>
<dbReference type="HAMAP" id="MF_00023">
    <property type="entry name" value="SmpB"/>
    <property type="match status" value="1"/>
</dbReference>
<dbReference type="InterPro" id="IPR023620">
    <property type="entry name" value="SmpB"/>
</dbReference>
<dbReference type="InterPro" id="IPR000037">
    <property type="entry name" value="SsrA-bd_prot"/>
</dbReference>
<dbReference type="InterPro" id="IPR020081">
    <property type="entry name" value="SsrA-bd_prot_CS"/>
</dbReference>
<dbReference type="NCBIfam" id="NF003843">
    <property type="entry name" value="PRK05422.1"/>
    <property type="match status" value="1"/>
</dbReference>
<dbReference type="NCBIfam" id="TIGR00086">
    <property type="entry name" value="smpB"/>
    <property type="match status" value="1"/>
</dbReference>
<dbReference type="PANTHER" id="PTHR30308:SF2">
    <property type="entry name" value="SSRA-BINDING PROTEIN"/>
    <property type="match status" value="1"/>
</dbReference>
<dbReference type="PANTHER" id="PTHR30308">
    <property type="entry name" value="TMRNA-BINDING COMPONENT OF TRANS-TRANSLATION TAGGING COMPLEX"/>
    <property type="match status" value="1"/>
</dbReference>
<dbReference type="Pfam" id="PF01668">
    <property type="entry name" value="SmpB"/>
    <property type="match status" value="1"/>
</dbReference>
<dbReference type="SUPFAM" id="SSF74982">
    <property type="entry name" value="Small protein B (SmpB)"/>
    <property type="match status" value="1"/>
</dbReference>
<dbReference type="PROSITE" id="PS01317">
    <property type="entry name" value="SSRP"/>
    <property type="match status" value="1"/>
</dbReference>
<gene>
    <name evidence="1" type="primary">smpB</name>
    <name type="ordered locus">SAUSA300_0765</name>
</gene>
<evidence type="ECO:0000255" key="1">
    <source>
        <dbReference type="HAMAP-Rule" id="MF_00023"/>
    </source>
</evidence>
<feature type="chain" id="PRO_1000002156" description="SsrA-binding protein">
    <location>
        <begin position="1"/>
        <end position="154"/>
    </location>
</feature>